<organism>
    <name type="scientific">Helicobacter acinonychis (strain Sheeba)</name>
    <dbReference type="NCBI Taxonomy" id="382638"/>
    <lineage>
        <taxon>Bacteria</taxon>
        <taxon>Pseudomonadati</taxon>
        <taxon>Campylobacterota</taxon>
        <taxon>Epsilonproteobacteria</taxon>
        <taxon>Campylobacterales</taxon>
        <taxon>Helicobacteraceae</taxon>
        <taxon>Helicobacter</taxon>
    </lineage>
</organism>
<name>RNC_HELAH</name>
<dbReference type="EC" id="3.1.26.3" evidence="1"/>
<dbReference type="EMBL" id="AM260522">
    <property type="protein sequence ID" value="CAJ99630.1"/>
    <property type="molecule type" value="Genomic_DNA"/>
</dbReference>
<dbReference type="RefSeq" id="WP_011577743.1">
    <property type="nucleotide sequence ID" value="NC_008229.1"/>
</dbReference>
<dbReference type="SMR" id="Q17XJ6"/>
<dbReference type="STRING" id="382638.Hac_0847"/>
<dbReference type="GeneID" id="31758261"/>
<dbReference type="KEGG" id="hac:Hac_0847"/>
<dbReference type="eggNOG" id="COG0571">
    <property type="taxonomic scope" value="Bacteria"/>
</dbReference>
<dbReference type="HOGENOM" id="CLU_000907_1_3_7"/>
<dbReference type="OrthoDB" id="9805026at2"/>
<dbReference type="BioCyc" id="HACI382638:HAC_RS03650-MONOMER"/>
<dbReference type="Proteomes" id="UP000000775">
    <property type="component" value="Chromosome"/>
</dbReference>
<dbReference type="GO" id="GO:0005737">
    <property type="term" value="C:cytoplasm"/>
    <property type="evidence" value="ECO:0007669"/>
    <property type="project" value="UniProtKB-SubCell"/>
</dbReference>
<dbReference type="GO" id="GO:0003725">
    <property type="term" value="F:double-stranded RNA binding"/>
    <property type="evidence" value="ECO:0007669"/>
    <property type="project" value="TreeGrafter"/>
</dbReference>
<dbReference type="GO" id="GO:0046872">
    <property type="term" value="F:metal ion binding"/>
    <property type="evidence" value="ECO:0007669"/>
    <property type="project" value="UniProtKB-KW"/>
</dbReference>
<dbReference type="GO" id="GO:0004525">
    <property type="term" value="F:ribonuclease III activity"/>
    <property type="evidence" value="ECO:0007669"/>
    <property type="project" value="UniProtKB-UniRule"/>
</dbReference>
<dbReference type="GO" id="GO:0019843">
    <property type="term" value="F:rRNA binding"/>
    <property type="evidence" value="ECO:0007669"/>
    <property type="project" value="UniProtKB-KW"/>
</dbReference>
<dbReference type="GO" id="GO:0006397">
    <property type="term" value="P:mRNA processing"/>
    <property type="evidence" value="ECO:0007669"/>
    <property type="project" value="UniProtKB-UniRule"/>
</dbReference>
<dbReference type="GO" id="GO:0010468">
    <property type="term" value="P:regulation of gene expression"/>
    <property type="evidence" value="ECO:0007669"/>
    <property type="project" value="TreeGrafter"/>
</dbReference>
<dbReference type="GO" id="GO:0006364">
    <property type="term" value="P:rRNA processing"/>
    <property type="evidence" value="ECO:0007669"/>
    <property type="project" value="UniProtKB-UniRule"/>
</dbReference>
<dbReference type="GO" id="GO:0008033">
    <property type="term" value="P:tRNA processing"/>
    <property type="evidence" value="ECO:0007669"/>
    <property type="project" value="UniProtKB-KW"/>
</dbReference>
<dbReference type="CDD" id="cd10845">
    <property type="entry name" value="DSRM_RNAse_III_family"/>
    <property type="match status" value="1"/>
</dbReference>
<dbReference type="CDD" id="cd00593">
    <property type="entry name" value="RIBOc"/>
    <property type="match status" value="1"/>
</dbReference>
<dbReference type="FunFam" id="1.10.1520.10:FF:000001">
    <property type="entry name" value="Ribonuclease 3"/>
    <property type="match status" value="1"/>
</dbReference>
<dbReference type="FunFam" id="3.30.160.20:FF:000003">
    <property type="entry name" value="Ribonuclease 3"/>
    <property type="match status" value="1"/>
</dbReference>
<dbReference type="Gene3D" id="3.30.160.20">
    <property type="match status" value="1"/>
</dbReference>
<dbReference type="Gene3D" id="1.10.1520.10">
    <property type="entry name" value="Ribonuclease III domain"/>
    <property type="match status" value="1"/>
</dbReference>
<dbReference type="HAMAP" id="MF_00104">
    <property type="entry name" value="RNase_III"/>
    <property type="match status" value="1"/>
</dbReference>
<dbReference type="InterPro" id="IPR014720">
    <property type="entry name" value="dsRBD_dom"/>
</dbReference>
<dbReference type="InterPro" id="IPR011907">
    <property type="entry name" value="RNase_III"/>
</dbReference>
<dbReference type="InterPro" id="IPR000999">
    <property type="entry name" value="RNase_III_dom"/>
</dbReference>
<dbReference type="InterPro" id="IPR036389">
    <property type="entry name" value="RNase_III_sf"/>
</dbReference>
<dbReference type="NCBIfam" id="TIGR02191">
    <property type="entry name" value="RNaseIII"/>
    <property type="match status" value="1"/>
</dbReference>
<dbReference type="PANTHER" id="PTHR11207:SF0">
    <property type="entry name" value="RIBONUCLEASE 3"/>
    <property type="match status" value="1"/>
</dbReference>
<dbReference type="PANTHER" id="PTHR11207">
    <property type="entry name" value="RIBONUCLEASE III"/>
    <property type="match status" value="1"/>
</dbReference>
<dbReference type="Pfam" id="PF00035">
    <property type="entry name" value="dsrm"/>
    <property type="match status" value="1"/>
</dbReference>
<dbReference type="Pfam" id="PF14622">
    <property type="entry name" value="Ribonucleas_3_3"/>
    <property type="match status" value="1"/>
</dbReference>
<dbReference type="SMART" id="SM00358">
    <property type="entry name" value="DSRM"/>
    <property type="match status" value="1"/>
</dbReference>
<dbReference type="SMART" id="SM00535">
    <property type="entry name" value="RIBOc"/>
    <property type="match status" value="1"/>
</dbReference>
<dbReference type="SUPFAM" id="SSF54768">
    <property type="entry name" value="dsRNA-binding domain-like"/>
    <property type="match status" value="1"/>
</dbReference>
<dbReference type="SUPFAM" id="SSF69065">
    <property type="entry name" value="RNase III domain-like"/>
    <property type="match status" value="1"/>
</dbReference>
<dbReference type="PROSITE" id="PS50137">
    <property type="entry name" value="DS_RBD"/>
    <property type="match status" value="1"/>
</dbReference>
<dbReference type="PROSITE" id="PS00517">
    <property type="entry name" value="RNASE_3_1"/>
    <property type="match status" value="1"/>
</dbReference>
<dbReference type="PROSITE" id="PS50142">
    <property type="entry name" value="RNASE_3_2"/>
    <property type="match status" value="1"/>
</dbReference>
<comment type="function">
    <text evidence="1">Digests double-stranded RNA. Involved in the processing of primary rRNA transcript to yield the immediate precursors to the large and small rRNAs (23S and 16S). Processes some mRNAs, and tRNAs when they are encoded in the rRNA operon. Processes pre-crRNA and tracrRNA of type II CRISPR loci if present in the organism.</text>
</comment>
<comment type="catalytic activity">
    <reaction evidence="1">
        <text>Endonucleolytic cleavage to 5'-phosphomonoester.</text>
        <dbReference type="EC" id="3.1.26.3"/>
    </reaction>
</comment>
<comment type="cofactor">
    <cofactor evidence="1">
        <name>Mg(2+)</name>
        <dbReference type="ChEBI" id="CHEBI:18420"/>
    </cofactor>
</comment>
<comment type="subunit">
    <text evidence="1">Homodimer.</text>
</comment>
<comment type="subcellular location">
    <subcellularLocation>
        <location evidence="1">Cytoplasm</location>
    </subcellularLocation>
</comment>
<comment type="similarity">
    <text evidence="1">Belongs to the ribonuclease III family.</text>
</comment>
<protein>
    <recommendedName>
        <fullName evidence="1">Ribonuclease 3</fullName>
        <ecNumber evidence="1">3.1.26.3</ecNumber>
    </recommendedName>
    <alternativeName>
        <fullName evidence="1">Ribonuclease III</fullName>
        <shortName evidence="1">RNase III</shortName>
    </alternativeName>
</protein>
<evidence type="ECO:0000255" key="1">
    <source>
        <dbReference type="HAMAP-Rule" id="MF_00104"/>
    </source>
</evidence>
<feature type="chain" id="PRO_1000075765" description="Ribonuclease 3">
    <location>
        <begin position="1"/>
        <end position="234"/>
    </location>
</feature>
<feature type="domain" description="RNase III" evidence="1">
    <location>
        <begin position="13"/>
        <end position="136"/>
    </location>
</feature>
<feature type="domain" description="DRBM" evidence="1">
    <location>
        <begin position="163"/>
        <end position="232"/>
    </location>
</feature>
<feature type="active site" evidence="1">
    <location>
        <position position="53"/>
    </location>
</feature>
<feature type="active site" evidence="1">
    <location>
        <position position="125"/>
    </location>
</feature>
<feature type="binding site" evidence="1">
    <location>
        <position position="49"/>
    </location>
    <ligand>
        <name>Mg(2+)</name>
        <dbReference type="ChEBI" id="CHEBI:18420"/>
    </ligand>
</feature>
<feature type="binding site" evidence="1">
    <location>
        <position position="122"/>
    </location>
    <ligand>
        <name>Mg(2+)</name>
        <dbReference type="ChEBI" id="CHEBI:18420"/>
    </ligand>
</feature>
<feature type="binding site" evidence="1">
    <location>
        <position position="125"/>
    </location>
    <ligand>
        <name>Mg(2+)</name>
        <dbReference type="ChEBI" id="CHEBI:18420"/>
    </ligand>
</feature>
<accession>Q17XJ6</accession>
<gene>
    <name evidence="1" type="primary">rnc</name>
    <name type="ordered locus">Hac_0847</name>
</gene>
<keyword id="KW-0963">Cytoplasm</keyword>
<keyword id="KW-0255">Endonuclease</keyword>
<keyword id="KW-0378">Hydrolase</keyword>
<keyword id="KW-0460">Magnesium</keyword>
<keyword id="KW-0479">Metal-binding</keyword>
<keyword id="KW-0507">mRNA processing</keyword>
<keyword id="KW-0540">Nuclease</keyword>
<keyword id="KW-0694">RNA-binding</keyword>
<keyword id="KW-0698">rRNA processing</keyword>
<keyword id="KW-0699">rRNA-binding</keyword>
<keyword id="KW-0819">tRNA processing</keyword>
<sequence>MKNKNNKLADCPYITLEKALGYSFKDKHLLEQALTHKSCKLALNNERLEFLGDAVLGLVIGELLYHKFYQYDEGKLSKLRASIVSAQGFTKLARAISLQDYLRVSSSEETSKGREKPSILSSAFEALMAGVYLEAGLDKVRKIMQNLLNRAYKRLDLEHLSVDYKTALQELTQAQFCVIPTYQLLKEKGPAHHKEFEMVLYIQNQMYATAKGKSKKEAEQQCAYQALQKLKGIK</sequence>
<reference key="1">
    <citation type="journal article" date="2006" name="PLoS Genet.">
        <title>Who ate whom? Adaptive Helicobacter genomic changes that accompanied a host jump from early humans to large felines.</title>
        <authorList>
            <person name="Eppinger M."/>
            <person name="Baar C."/>
            <person name="Linz B."/>
            <person name="Raddatz G."/>
            <person name="Lanz C."/>
            <person name="Keller H."/>
            <person name="Morelli G."/>
            <person name="Gressmann H."/>
            <person name="Achtman M."/>
            <person name="Schuster S.C."/>
        </authorList>
    </citation>
    <scope>NUCLEOTIDE SEQUENCE [LARGE SCALE GENOMIC DNA]</scope>
    <source>
        <strain>Sheeba</strain>
    </source>
</reference>
<proteinExistence type="inferred from homology"/>